<dbReference type="EMBL" id="AB023420">
    <property type="protein sequence ID" value="BAA75062.1"/>
    <property type="molecule type" value="mRNA"/>
</dbReference>
<dbReference type="EMBL" id="BT007375">
    <property type="protein sequence ID" value="AAP36039.1"/>
    <property type="molecule type" value="mRNA"/>
</dbReference>
<dbReference type="EMBL" id="AC113410">
    <property type="status" value="NOT_ANNOTATED_CDS"/>
    <property type="molecule type" value="Genomic_DNA"/>
</dbReference>
<dbReference type="EMBL" id="BC002526">
    <property type="protein sequence ID" value="AAH02526.1"/>
    <property type="molecule type" value="mRNA"/>
</dbReference>
<dbReference type="EMBL" id="BC110861">
    <property type="protein sequence ID" value="AAI10862.1"/>
    <property type="molecule type" value="mRNA"/>
</dbReference>
<dbReference type="EMBL" id="BC126122">
    <property type="protein sequence ID" value="AAI26123.1"/>
    <property type="molecule type" value="mRNA"/>
</dbReference>
<dbReference type="EMBL" id="BC126124">
    <property type="protein sequence ID" value="AAI26125.1"/>
    <property type="molecule type" value="mRNA"/>
</dbReference>
<dbReference type="EMBL" id="L12723">
    <property type="protein sequence ID" value="AAA02807.1"/>
    <property type="status" value="ALT_FRAME"/>
    <property type="molecule type" value="mRNA"/>
</dbReference>
<dbReference type="CCDS" id="CCDS4166.1">
    <molecule id="P34932-1"/>
</dbReference>
<dbReference type="PIR" id="I56208">
    <property type="entry name" value="I56208"/>
</dbReference>
<dbReference type="RefSeq" id="NP_002145.3">
    <molecule id="P34932-1"/>
    <property type="nucleotide sequence ID" value="NM_002154.3"/>
</dbReference>
<dbReference type="RefSeq" id="XP_054208468.1">
    <molecule id="P34932-1"/>
    <property type="nucleotide sequence ID" value="XM_054352493.1"/>
</dbReference>
<dbReference type="SMR" id="P34932"/>
<dbReference type="BioGRID" id="109540">
    <property type="interactions" value="737"/>
</dbReference>
<dbReference type="CORUM" id="P34932"/>
<dbReference type="DIP" id="DIP-460N"/>
<dbReference type="FunCoup" id="P34932">
    <property type="interactions" value="4098"/>
</dbReference>
<dbReference type="IntAct" id="P34932">
    <property type="interactions" value="185"/>
</dbReference>
<dbReference type="MINT" id="P34932"/>
<dbReference type="STRING" id="9606.ENSP00000302961"/>
<dbReference type="ChEMBL" id="CHEMBL5169130"/>
<dbReference type="DrugBank" id="DB12695">
    <property type="generic name" value="Phenethyl Isothiocyanate"/>
</dbReference>
<dbReference type="GlyGen" id="P34932">
    <property type="glycosylation" value="4 sites, 1 O-linked glycan (3 sites)"/>
</dbReference>
<dbReference type="iPTMnet" id="P34932"/>
<dbReference type="MetOSite" id="P34932"/>
<dbReference type="PhosphoSitePlus" id="P34932"/>
<dbReference type="SwissPalm" id="P34932"/>
<dbReference type="BioMuta" id="HSPA4"/>
<dbReference type="DMDM" id="206729934"/>
<dbReference type="REPRODUCTION-2DPAGE" id="IPI00002966"/>
<dbReference type="REPRODUCTION-2DPAGE" id="P34932"/>
<dbReference type="jPOST" id="P34932"/>
<dbReference type="MassIVE" id="P34932"/>
<dbReference type="PaxDb" id="9606-ENSP00000302961"/>
<dbReference type="PeptideAtlas" id="P34932"/>
<dbReference type="PRIDE" id="P34932"/>
<dbReference type="ProteomicsDB" id="54957">
    <molecule id="P34932-1"/>
</dbReference>
<dbReference type="ProteomicsDB" id="79105"/>
<dbReference type="Pumba" id="P34932"/>
<dbReference type="Antibodypedia" id="2204">
    <property type="antibodies" value="584 antibodies from 35 providers"/>
</dbReference>
<dbReference type="DNASU" id="3308"/>
<dbReference type="Ensembl" id="ENST00000304858.7">
    <molecule id="P34932-1"/>
    <property type="protein sequence ID" value="ENSP00000302961.2"/>
    <property type="gene ID" value="ENSG00000170606.16"/>
</dbReference>
<dbReference type="GeneID" id="3308"/>
<dbReference type="KEGG" id="hsa:3308"/>
<dbReference type="MANE-Select" id="ENST00000304858.7">
    <property type="protein sequence ID" value="ENSP00000302961.2"/>
    <property type="RefSeq nucleotide sequence ID" value="NM_002154.4"/>
    <property type="RefSeq protein sequence ID" value="NP_002145.3"/>
</dbReference>
<dbReference type="UCSC" id="uc003kyj.4">
    <molecule id="P34932-1"/>
    <property type="organism name" value="human"/>
</dbReference>
<dbReference type="AGR" id="HGNC:5237"/>
<dbReference type="CTD" id="3308"/>
<dbReference type="DisGeNET" id="3308"/>
<dbReference type="GeneCards" id="HSPA4"/>
<dbReference type="HGNC" id="HGNC:5237">
    <property type="gene designation" value="HSPA4"/>
</dbReference>
<dbReference type="HPA" id="ENSG00000170606">
    <property type="expression patterns" value="Low tissue specificity"/>
</dbReference>
<dbReference type="MIM" id="601113">
    <property type="type" value="gene"/>
</dbReference>
<dbReference type="neXtProt" id="NX_P34932"/>
<dbReference type="OpenTargets" id="ENSG00000170606"/>
<dbReference type="PharmGKB" id="PA29503"/>
<dbReference type="VEuPathDB" id="HostDB:ENSG00000170606"/>
<dbReference type="eggNOG" id="KOG0103">
    <property type="taxonomic scope" value="Eukaryota"/>
</dbReference>
<dbReference type="GeneTree" id="ENSGT00940000156067"/>
<dbReference type="HOGENOM" id="CLU_005965_11_2_1"/>
<dbReference type="InParanoid" id="P34932"/>
<dbReference type="OMA" id="KEYECIE"/>
<dbReference type="OrthoDB" id="434160at2759"/>
<dbReference type="PAN-GO" id="P34932">
    <property type="GO annotations" value="3 GO annotations based on evolutionary models"/>
</dbReference>
<dbReference type="PhylomeDB" id="P34932"/>
<dbReference type="TreeFam" id="TF105043"/>
<dbReference type="PathwayCommons" id="P34932"/>
<dbReference type="Reactome" id="R-HSA-3371453">
    <property type="pathway name" value="Regulation of HSF1-mediated heat shock response"/>
</dbReference>
<dbReference type="SignaLink" id="P34932"/>
<dbReference type="BioGRID-ORCS" id="3308">
    <property type="hits" value="32 hits in 1162 CRISPR screens"/>
</dbReference>
<dbReference type="CD-CODE" id="91857CE7">
    <property type="entry name" value="Nucleolus"/>
</dbReference>
<dbReference type="CD-CODE" id="DEE660B4">
    <property type="entry name" value="Stress granule"/>
</dbReference>
<dbReference type="CD-CODE" id="FB4E32DD">
    <property type="entry name" value="Presynaptic clusters and postsynaptic densities"/>
</dbReference>
<dbReference type="ChiTaRS" id="HSPA4">
    <property type="organism name" value="human"/>
</dbReference>
<dbReference type="GeneWiki" id="HSPA4"/>
<dbReference type="GenomeRNAi" id="3308"/>
<dbReference type="Pharos" id="P34932">
    <property type="development level" value="Tbio"/>
</dbReference>
<dbReference type="PRO" id="PR:P34932"/>
<dbReference type="Proteomes" id="UP000005640">
    <property type="component" value="Chromosome 5"/>
</dbReference>
<dbReference type="RNAct" id="P34932">
    <property type="molecule type" value="protein"/>
</dbReference>
<dbReference type="Bgee" id="ENSG00000170606">
    <property type="expression patterns" value="Expressed in primordial germ cell in gonad and 210 other cell types or tissues"/>
</dbReference>
<dbReference type="ExpressionAtlas" id="P34932">
    <property type="expression patterns" value="baseline and differential"/>
</dbReference>
<dbReference type="GO" id="GO:0005829">
    <property type="term" value="C:cytosol"/>
    <property type="evidence" value="ECO:0000314"/>
    <property type="project" value="UniProtKB"/>
</dbReference>
<dbReference type="GO" id="GO:0070062">
    <property type="term" value="C:extracellular exosome"/>
    <property type="evidence" value="ECO:0000314"/>
    <property type="project" value="UniProtKB"/>
</dbReference>
<dbReference type="GO" id="GO:0005634">
    <property type="term" value="C:nucleus"/>
    <property type="evidence" value="ECO:0000318"/>
    <property type="project" value="GO_Central"/>
</dbReference>
<dbReference type="GO" id="GO:0000774">
    <property type="term" value="F:adenyl-nucleotide exchange factor activity"/>
    <property type="evidence" value="ECO:0000318"/>
    <property type="project" value="GO_Central"/>
</dbReference>
<dbReference type="GO" id="GO:0005524">
    <property type="term" value="F:ATP binding"/>
    <property type="evidence" value="ECO:0000303"/>
    <property type="project" value="UniProtKB"/>
</dbReference>
<dbReference type="GO" id="GO:0140662">
    <property type="term" value="F:ATP-dependent protein folding chaperone"/>
    <property type="evidence" value="ECO:0007669"/>
    <property type="project" value="InterPro"/>
</dbReference>
<dbReference type="GO" id="GO:0051131">
    <property type="term" value="P:chaperone-mediated protein complex assembly"/>
    <property type="evidence" value="ECO:0000314"/>
    <property type="project" value="BHF-UCL"/>
</dbReference>
<dbReference type="GO" id="GO:0006457">
    <property type="term" value="P:protein folding"/>
    <property type="evidence" value="ECO:0000318"/>
    <property type="project" value="GO_Central"/>
</dbReference>
<dbReference type="GO" id="GO:0030150">
    <property type="term" value="P:protein import into mitochondrial matrix"/>
    <property type="evidence" value="ECO:0000314"/>
    <property type="project" value="BHF-UCL"/>
</dbReference>
<dbReference type="GO" id="GO:0006986">
    <property type="term" value="P:response to unfolded protein"/>
    <property type="evidence" value="ECO:0000303"/>
    <property type="project" value="UniProtKB"/>
</dbReference>
<dbReference type="CDD" id="cd11737">
    <property type="entry name" value="ASKHA_NBD_HSP70_HSPA4"/>
    <property type="match status" value="1"/>
</dbReference>
<dbReference type="FunFam" id="1.20.1270.10:FF:000002">
    <property type="entry name" value="Heat shock 70 kDa protein 4"/>
    <property type="match status" value="1"/>
</dbReference>
<dbReference type="FunFam" id="3.30.30.30:FF:000002">
    <property type="entry name" value="Heat shock 70 kDa protein 4"/>
    <property type="match status" value="1"/>
</dbReference>
<dbReference type="FunFam" id="3.30.420.40:FF:000171">
    <property type="entry name" value="Heat shock 70 kDa protein 4"/>
    <property type="match status" value="1"/>
</dbReference>
<dbReference type="FunFam" id="3.90.640.10:FF:000004">
    <property type="entry name" value="Heat shock 70 kDa protein 4"/>
    <property type="match status" value="1"/>
</dbReference>
<dbReference type="FunFam" id="1.20.1270.10:FF:000018">
    <property type="entry name" value="heat shock 70 kDa protein 4 isoform X1"/>
    <property type="match status" value="1"/>
</dbReference>
<dbReference type="FunFam" id="2.60.34.10:FF:000010">
    <property type="entry name" value="heat shock 70 kDa protein 4 isoform X1"/>
    <property type="match status" value="1"/>
</dbReference>
<dbReference type="FunFam" id="3.30.420.40:FF:000495">
    <property type="entry name" value="Heat shock protein 4b"/>
    <property type="match status" value="1"/>
</dbReference>
<dbReference type="FunFam" id="3.30.420.40:FF:000767">
    <property type="entry name" value="Heat shock protein 70 (HSP70)-4, putative"/>
    <property type="match status" value="2"/>
</dbReference>
<dbReference type="Gene3D" id="1.20.1270.10">
    <property type="match status" value="2"/>
</dbReference>
<dbReference type="Gene3D" id="3.30.30.30">
    <property type="match status" value="1"/>
</dbReference>
<dbReference type="Gene3D" id="3.30.420.40">
    <property type="match status" value="2"/>
</dbReference>
<dbReference type="Gene3D" id="3.90.640.10">
    <property type="entry name" value="Actin, Chain A, domain 4"/>
    <property type="match status" value="1"/>
</dbReference>
<dbReference type="Gene3D" id="2.60.34.10">
    <property type="entry name" value="Substrate Binding Domain Of DNAk, Chain A, domain 1"/>
    <property type="match status" value="1"/>
</dbReference>
<dbReference type="InterPro" id="IPR043129">
    <property type="entry name" value="ATPase_NBD"/>
</dbReference>
<dbReference type="InterPro" id="IPR018181">
    <property type="entry name" value="Heat_shock_70_CS"/>
</dbReference>
<dbReference type="InterPro" id="IPR029048">
    <property type="entry name" value="HSP70_C_sf"/>
</dbReference>
<dbReference type="InterPro" id="IPR029047">
    <property type="entry name" value="HSP70_peptide-bd_sf"/>
</dbReference>
<dbReference type="InterPro" id="IPR013126">
    <property type="entry name" value="Hsp_70_fam"/>
</dbReference>
<dbReference type="InterPro" id="IPR042052">
    <property type="entry name" value="HSPA4_NBD"/>
</dbReference>
<dbReference type="PANTHER" id="PTHR45639:SF6">
    <property type="entry name" value="HEAT SHOCK 70 KDA PROTEIN 4"/>
    <property type="match status" value="1"/>
</dbReference>
<dbReference type="PANTHER" id="PTHR45639">
    <property type="entry name" value="HSC70CB, ISOFORM G-RELATED"/>
    <property type="match status" value="1"/>
</dbReference>
<dbReference type="Pfam" id="PF00012">
    <property type="entry name" value="HSP70"/>
    <property type="match status" value="1"/>
</dbReference>
<dbReference type="PRINTS" id="PR00301">
    <property type="entry name" value="HEATSHOCK70"/>
</dbReference>
<dbReference type="SUPFAM" id="SSF53067">
    <property type="entry name" value="Actin-like ATPase domain"/>
    <property type="match status" value="2"/>
</dbReference>
<dbReference type="SUPFAM" id="SSF100934">
    <property type="entry name" value="Heat shock protein 70kD (HSP70), C-terminal subdomain"/>
    <property type="match status" value="2"/>
</dbReference>
<dbReference type="SUPFAM" id="SSF100920">
    <property type="entry name" value="Heat shock protein 70kD (HSP70), peptide-binding domain"/>
    <property type="match status" value="1"/>
</dbReference>
<dbReference type="PROSITE" id="PS00329">
    <property type="entry name" value="HSP70_2"/>
    <property type="match status" value="1"/>
</dbReference>
<dbReference type="PROSITE" id="PS01036">
    <property type="entry name" value="HSP70_3"/>
    <property type="match status" value="1"/>
</dbReference>
<feature type="chain" id="PRO_0000078262" description="Heat shock 70 kDa protein 4">
    <location>
        <begin position="1"/>
        <end position="840"/>
    </location>
</feature>
<feature type="region of interest" description="Disordered" evidence="3">
    <location>
        <begin position="500"/>
        <end position="575"/>
    </location>
</feature>
<feature type="region of interest" description="Disordered" evidence="3">
    <location>
        <begin position="779"/>
        <end position="840"/>
    </location>
</feature>
<feature type="compositionally biased region" description="Basic and acidic residues" evidence="3">
    <location>
        <begin position="514"/>
        <end position="533"/>
    </location>
</feature>
<feature type="compositionally biased region" description="Basic and acidic residues" evidence="3">
    <location>
        <begin position="788"/>
        <end position="799"/>
    </location>
</feature>
<feature type="compositionally biased region" description="Basic and acidic residues" evidence="3">
    <location>
        <begin position="829"/>
        <end position="840"/>
    </location>
</feature>
<feature type="modified residue" description="N6-acetyllysine" evidence="2">
    <location>
        <position position="53"/>
    </location>
</feature>
<feature type="modified residue" description="Phosphoserine" evidence="11 12 13">
    <location>
        <position position="76"/>
    </location>
</feature>
<feature type="modified residue" description="Phosphotyrosine" evidence="8">
    <location>
        <position position="89"/>
    </location>
</feature>
<feature type="modified residue" description="Phosphotyrosine" evidence="8 11">
    <location>
        <position position="336"/>
    </location>
</feature>
<feature type="modified residue" description="Phosphoserine" evidence="13">
    <location>
        <position position="393"/>
    </location>
</feature>
<feature type="modified residue" description="Phosphoserine" evidence="2">
    <location>
        <position position="415"/>
    </location>
</feature>
<feature type="modified residue" description="N6-acetyllysine" evidence="10">
    <location>
        <position position="430"/>
    </location>
</feature>
<feature type="modified residue" description="Phosphothreonine" evidence="9 13">
    <location>
        <position position="538"/>
    </location>
</feature>
<feature type="modified residue" description="Phosphoserine" evidence="12">
    <location>
        <position position="546"/>
    </location>
</feature>
<feature type="modified residue" description="Phosphoserine" evidence="13">
    <location>
        <position position="647"/>
    </location>
</feature>
<feature type="modified residue" description="Phosphotyrosine" evidence="2">
    <location>
        <position position="660"/>
    </location>
</feature>
<feature type="modified residue" description="N6-acetyllysine" evidence="10">
    <location>
        <position position="679"/>
    </location>
</feature>
<feature type="modified residue" description="Phosphoserine" evidence="13">
    <location>
        <position position="756"/>
    </location>
</feature>
<feature type="modified residue" description="N6-methyllysine" evidence="14">
    <location>
        <position position="773"/>
    </location>
</feature>
<feature type="splice variant" id="VSP_056885" description="In isoform 2." evidence="4 6">
    <location>
        <begin position="109"/>
        <end position="800"/>
    </location>
</feature>
<feature type="sequence conflict" description="In Ref. 5; AAA02807." evidence="7" ref="5">
    <original>L</original>
    <variation>W</variation>
    <location>
        <position position="94"/>
    </location>
</feature>
<feature type="sequence conflict" description="In Ref. 5; AAA02807." evidence="7" ref="5">
    <original>A</original>
    <variation>R</variation>
    <location>
        <position position="190"/>
    </location>
</feature>
<feature type="sequence conflict" description="In Ref. 5; AAA02807." evidence="7" ref="5">
    <original>NQLL</original>
    <variation>ESAI</variation>
    <location>
        <begin position="583"/>
        <end position="586"/>
    </location>
</feature>
<feature type="sequence conflict" description="In Ref. 1; BAA75062." evidence="7" ref="1">
    <original>E</original>
    <variation>R</variation>
    <location>
        <position position="622"/>
    </location>
</feature>
<feature type="sequence conflict" description="In Ref. 1; BAA75062." evidence="7" ref="1">
    <original>D</original>
    <variation>G</variation>
    <location>
        <position position="644"/>
    </location>
</feature>
<feature type="sequence conflict" description="In Ref. 5; AAA02807." evidence="7" ref="5">
    <original>NNKL</original>
    <variation>EVTP</variation>
    <location>
        <begin position="746"/>
        <end position="749"/>
    </location>
</feature>
<accession>P34932</accession>
<accession>O95756</accession>
<accession>Q2TAL4</accession>
<accession>Q9BUK9</accession>
<reference key="1">
    <citation type="submission" date="1999-02" db="EMBL/GenBank/DDBJ databases">
        <title>Cloning and characterization of human apg-1 and apg-2, members of the hsp110 family, cDNAs and chromosomal assignment of the genes.</title>
        <authorList>
            <person name="Nonoguchi K."/>
            <person name="Fujita J."/>
        </authorList>
    </citation>
    <scope>NUCLEOTIDE SEQUENCE [MRNA] (ISOFORM 1)</scope>
</reference>
<reference key="2">
    <citation type="submission" date="2003-05" db="EMBL/GenBank/DDBJ databases">
        <title>Cloning of human full-length CDSs in BD Creator(TM) system donor vector.</title>
        <authorList>
            <person name="Kalnine N."/>
            <person name="Chen X."/>
            <person name="Rolfs A."/>
            <person name="Halleck A."/>
            <person name="Hines L."/>
            <person name="Eisenstein S."/>
            <person name="Koundinya M."/>
            <person name="Raphael J."/>
            <person name="Moreira D."/>
            <person name="Kelley T."/>
            <person name="LaBaer J."/>
            <person name="Lin Y."/>
            <person name="Phelan M."/>
            <person name="Farmer A."/>
        </authorList>
    </citation>
    <scope>NUCLEOTIDE SEQUENCE [LARGE SCALE MRNA] (ISOFORM 2)</scope>
</reference>
<reference key="3">
    <citation type="journal article" date="2004" name="Nature">
        <title>The DNA sequence and comparative analysis of human chromosome 5.</title>
        <authorList>
            <person name="Schmutz J."/>
            <person name="Martin J."/>
            <person name="Terry A."/>
            <person name="Couronne O."/>
            <person name="Grimwood J."/>
            <person name="Lowry S."/>
            <person name="Gordon L.A."/>
            <person name="Scott D."/>
            <person name="Xie G."/>
            <person name="Huang W."/>
            <person name="Hellsten U."/>
            <person name="Tran-Gyamfi M."/>
            <person name="She X."/>
            <person name="Prabhakar S."/>
            <person name="Aerts A."/>
            <person name="Altherr M."/>
            <person name="Bajorek E."/>
            <person name="Black S."/>
            <person name="Branscomb E."/>
            <person name="Caoile C."/>
            <person name="Challacombe J.F."/>
            <person name="Chan Y.M."/>
            <person name="Denys M."/>
            <person name="Detter J.C."/>
            <person name="Escobar J."/>
            <person name="Flowers D."/>
            <person name="Fotopulos D."/>
            <person name="Glavina T."/>
            <person name="Gomez M."/>
            <person name="Gonzales E."/>
            <person name="Goodstein D."/>
            <person name="Grigoriev I."/>
            <person name="Groza M."/>
            <person name="Hammon N."/>
            <person name="Hawkins T."/>
            <person name="Haydu L."/>
            <person name="Israni S."/>
            <person name="Jett J."/>
            <person name="Kadner K."/>
            <person name="Kimball H."/>
            <person name="Kobayashi A."/>
            <person name="Lopez F."/>
            <person name="Lou Y."/>
            <person name="Martinez D."/>
            <person name="Medina C."/>
            <person name="Morgan J."/>
            <person name="Nandkeshwar R."/>
            <person name="Noonan J.P."/>
            <person name="Pitluck S."/>
            <person name="Pollard M."/>
            <person name="Predki P."/>
            <person name="Priest J."/>
            <person name="Ramirez L."/>
            <person name="Retterer J."/>
            <person name="Rodriguez A."/>
            <person name="Rogers S."/>
            <person name="Salamov A."/>
            <person name="Salazar A."/>
            <person name="Thayer N."/>
            <person name="Tice H."/>
            <person name="Tsai M."/>
            <person name="Ustaszewska A."/>
            <person name="Vo N."/>
            <person name="Wheeler J."/>
            <person name="Wu K."/>
            <person name="Yang J."/>
            <person name="Dickson M."/>
            <person name="Cheng J.-F."/>
            <person name="Eichler E.E."/>
            <person name="Olsen A."/>
            <person name="Pennacchio L.A."/>
            <person name="Rokhsar D.S."/>
            <person name="Richardson P."/>
            <person name="Lucas S.M."/>
            <person name="Myers R.M."/>
            <person name="Rubin E.M."/>
        </authorList>
    </citation>
    <scope>NUCLEOTIDE SEQUENCE [LARGE SCALE GENOMIC DNA]</scope>
</reference>
<reference key="4">
    <citation type="journal article" date="2004" name="Genome Res.">
        <title>The status, quality, and expansion of the NIH full-length cDNA project: the Mammalian Gene Collection (MGC).</title>
        <authorList>
            <consortium name="The MGC Project Team"/>
        </authorList>
    </citation>
    <scope>NUCLEOTIDE SEQUENCE [LARGE SCALE MRNA] (ISOFORMS 1 AND 2)</scope>
    <source>
        <tissue>Brain</tissue>
        <tissue>Placenta</tissue>
        <tissue>Skin</tissue>
    </source>
</reference>
<reference key="5">
    <citation type="journal article" date="1993" name="J. Immunol.">
        <title>Molecular cloning of a novel human hsp70 from a B cell line and its assignment to chromosome 5.</title>
        <authorList>
            <person name="Fathallah D.M."/>
            <person name="Cherif D."/>
            <person name="Dellagi K."/>
            <person name="Arnaout M.A."/>
        </authorList>
    </citation>
    <scope>NUCLEOTIDE SEQUENCE [MRNA] OF 1-749 (ISOFORM 1)</scope>
    <source>
        <tissue>Lymphocyte</tissue>
    </source>
</reference>
<reference key="6">
    <citation type="submission" date="2008-12" db="UniProtKB">
        <authorList>
            <person name="Lubec G."/>
            <person name="Afjehi-Sadat L."/>
            <person name="Chen W.-Q."/>
            <person name="Sun Y."/>
        </authorList>
    </citation>
    <scope>PROTEIN SEQUENCE OF 20-33; 111-124; 170-185; 222-234; 333-346; 361-374 AND 391-422</scope>
    <scope>IDENTIFICATION BY MASS SPECTROMETRY</scope>
    <source>
        <tissue>Brain</tissue>
        <tissue>Cajal-Retzius cell</tissue>
        <tissue>Fetal brain cortex</tissue>
    </source>
</reference>
<reference key="7">
    <citation type="journal article" date="2005" name="Nat. Biotechnol.">
        <title>Immunoaffinity profiling of tyrosine phosphorylation in cancer cells.</title>
        <authorList>
            <person name="Rush J."/>
            <person name="Moritz A."/>
            <person name="Lee K.A."/>
            <person name="Guo A."/>
            <person name="Goss V.L."/>
            <person name="Spek E.J."/>
            <person name="Zhang H."/>
            <person name="Zha X.-M."/>
            <person name="Polakiewicz R.D."/>
            <person name="Comb M.J."/>
        </authorList>
    </citation>
    <scope>PHOSPHORYLATION [LARGE SCALE ANALYSIS] AT TYR-89 AND TYR-336</scope>
    <scope>IDENTIFICATION BY MASS SPECTROMETRY [LARGE SCALE ANALYSIS]</scope>
</reference>
<reference key="8">
    <citation type="journal article" date="2007" name="Science">
        <title>ATM and ATR substrate analysis reveals extensive protein networks responsive to DNA damage.</title>
        <authorList>
            <person name="Matsuoka S."/>
            <person name="Ballif B.A."/>
            <person name="Smogorzewska A."/>
            <person name="McDonald E.R. III"/>
            <person name="Hurov K.E."/>
            <person name="Luo J."/>
            <person name="Bakalarski C.E."/>
            <person name="Zhao Z."/>
            <person name="Solimini N."/>
            <person name="Lerenthal Y."/>
            <person name="Shiloh Y."/>
            <person name="Gygi S.P."/>
            <person name="Elledge S.J."/>
        </authorList>
    </citation>
    <scope>IDENTIFICATION BY MASS SPECTROMETRY [LARGE SCALE ANALYSIS]</scope>
    <source>
        <tissue>Embryonic kidney</tissue>
    </source>
</reference>
<reference key="9">
    <citation type="journal article" date="2008" name="Proc. Natl. Acad. Sci. U.S.A.">
        <title>A quantitative atlas of mitotic phosphorylation.</title>
        <authorList>
            <person name="Dephoure N."/>
            <person name="Zhou C."/>
            <person name="Villen J."/>
            <person name="Beausoleil S.A."/>
            <person name="Bakalarski C.E."/>
            <person name="Elledge S.J."/>
            <person name="Gygi S.P."/>
        </authorList>
    </citation>
    <scope>PHOSPHORYLATION [LARGE SCALE ANALYSIS] AT THR-538</scope>
    <scope>IDENTIFICATION BY MASS SPECTROMETRY [LARGE SCALE ANALYSIS]</scope>
    <source>
        <tissue>Cervix carcinoma</tissue>
    </source>
</reference>
<reference key="10">
    <citation type="journal article" date="2009" name="Cell Stress Chaperones">
        <title>Guidelines for the nomenclature of the human heat shock proteins.</title>
        <authorList>
            <person name="Kampinga H.H."/>
            <person name="Hageman J."/>
            <person name="Vos M.J."/>
            <person name="Kubota H."/>
            <person name="Tanguay R.M."/>
            <person name="Bruford E.A."/>
            <person name="Cheetham M.E."/>
            <person name="Chen B."/>
            <person name="Hightower L.E."/>
        </authorList>
    </citation>
    <scope>NOMENCLATURE</scope>
</reference>
<reference key="11">
    <citation type="journal article" date="2009" name="Sci. Signal.">
        <title>Quantitative phosphoproteomic analysis of T cell receptor signaling reveals system-wide modulation of protein-protein interactions.</title>
        <authorList>
            <person name="Mayya V."/>
            <person name="Lundgren D.H."/>
            <person name="Hwang S.-I."/>
            <person name="Rezaul K."/>
            <person name="Wu L."/>
            <person name="Eng J.K."/>
            <person name="Rodionov V."/>
            <person name="Han D.K."/>
        </authorList>
    </citation>
    <scope>PHOSPHORYLATION [LARGE SCALE ANALYSIS] AT SER-76 AND TYR-336</scope>
    <scope>IDENTIFICATION BY MASS SPECTROMETRY [LARGE SCALE ANALYSIS]</scope>
    <source>
        <tissue>Leukemic T-cell</tissue>
    </source>
</reference>
<reference key="12">
    <citation type="journal article" date="2009" name="Science">
        <title>Lysine acetylation targets protein complexes and co-regulates major cellular functions.</title>
        <authorList>
            <person name="Choudhary C."/>
            <person name="Kumar C."/>
            <person name="Gnad F."/>
            <person name="Nielsen M.L."/>
            <person name="Rehman M."/>
            <person name="Walther T.C."/>
            <person name="Olsen J.V."/>
            <person name="Mann M."/>
        </authorList>
    </citation>
    <scope>ACETYLATION [LARGE SCALE ANALYSIS] AT LYS-430 AND LYS-679</scope>
    <scope>IDENTIFICATION BY MASS SPECTROMETRY [LARGE SCALE ANALYSIS]</scope>
</reference>
<reference key="13">
    <citation type="journal article" date="2011" name="BMC Syst. Biol.">
        <title>Initial characterization of the human central proteome.</title>
        <authorList>
            <person name="Burkard T.R."/>
            <person name="Planyavsky M."/>
            <person name="Kaupe I."/>
            <person name="Breitwieser F.P."/>
            <person name="Buerckstuemmer T."/>
            <person name="Bennett K.L."/>
            <person name="Superti-Furga G."/>
            <person name="Colinge J."/>
        </authorList>
    </citation>
    <scope>IDENTIFICATION BY MASS SPECTROMETRY [LARGE SCALE ANALYSIS]</scope>
</reference>
<reference key="14">
    <citation type="journal article" date="2011" name="Sci. Signal.">
        <title>System-wide temporal characterization of the proteome and phosphoproteome of human embryonic stem cell differentiation.</title>
        <authorList>
            <person name="Rigbolt K.T."/>
            <person name="Prokhorova T.A."/>
            <person name="Akimov V."/>
            <person name="Henningsen J."/>
            <person name="Johansen P.T."/>
            <person name="Kratchmarova I."/>
            <person name="Kassem M."/>
            <person name="Mann M."/>
            <person name="Olsen J.V."/>
            <person name="Blagoev B."/>
        </authorList>
    </citation>
    <scope>PHOSPHORYLATION [LARGE SCALE ANALYSIS] AT SER-76 AND SER-546</scope>
    <scope>IDENTIFICATION BY MASS SPECTROMETRY [LARGE SCALE ANALYSIS]</scope>
</reference>
<reference key="15">
    <citation type="journal article" date="2013" name="J. Proteome Res.">
        <title>Toward a comprehensive characterization of a human cancer cell phosphoproteome.</title>
        <authorList>
            <person name="Zhou H."/>
            <person name="Di Palma S."/>
            <person name="Preisinger C."/>
            <person name="Peng M."/>
            <person name="Polat A.N."/>
            <person name="Heck A.J."/>
            <person name="Mohammed S."/>
        </authorList>
    </citation>
    <scope>PHOSPHORYLATION [LARGE SCALE ANALYSIS] AT SER-76; SER-393; THR-538; SER-647 AND SER-756</scope>
    <scope>IDENTIFICATION BY MASS SPECTROMETRY [LARGE SCALE ANALYSIS]</scope>
    <source>
        <tissue>Cervix carcinoma</tissue>
        <tissue>Erythroleukemia</tissue>
    </source>
</reference>
<reference key="16">
    <citation type="journal article" date="2014" name="J. Proteomics">
        <title>An enzyme assisted RP-RPLC approach for in-depth analysis of human liver phosphoproteome.</title>
        <authorList>
            <person name="Bian Y."/>
            <person name="Song C."/>
            <person name="Cheng K."/>
            <person name="Dong M."/>
            <person name="Wang F."/>
            <person name="Huang J."/>
            <person name="Sun D."/>
            <person name="Wang L."/>
            <person name="Ye M."/>
            <person name="Zou H."/>
        </authorList>
    </citation>
    <scope>IDENTIFICATION BY MASS SPECTROMETRY [LARGE SCALE ANALYSIS]</scope>
    <source>
        <tissue>Liver</tissue>
    </source>
</reference>
<reference key="17">
    <citation type="journal article" date="2014" name="Mol. Cell. Proteomics">
        <title>Immunoaffinity enrichment and mass spectrometry analysis of protein methylation.</title>
        <authorList>
            <person name="Guo A."/>
            <person name="Gu H."/>
            <person name="Zhou J."/>
            <person name="Mulhern D."/>
            <person name="Wang Y."/>
            <person name="Lee K.A."/>
            <person name="Yang V."/>
            <person name="Aguiar M."/>
            <person name="Kornhauser J."/>
            <person name="Jia X."/>
            <person name="Ren J."/>
            <person name="Beausoleil S.A."/>
            <person name="Silva J.C."/>
            <person name="Vemulapalli V."/>
            <person name="Bedford M.T."/>
            <person name="Comb M.J."/>
        </authorList>
    </citation>
    <scope>METHYLATION [LARGE SCALE ANALYSIS] AT LYS-773</scope>
    <scope>IDENTIFICATION BY MASS SPECTROMETRY [LARGE SCALE ANALYSIS]</scope>
    <source>
        <tissue>Colon carcinoma</tissue>
    </source>
</reference>
<organism>
    <name type="scientific">Homo sapiens</name>
    <name type="common">Human</name>
    <dbReference type="NCBI Taxonomy" id="9606"/>
    <lineage>
        <taxon>Eukaryota</taxon>
        <taxon>Metazoa</taxon>
        <taxon>Chordata</taxon>
        <taxon>Craniata</taxon>
        <taxon>Vertebrata</taxon>
        <taxon>Euteleostomi</taxon>
        <taxon>Mammalia</taxon>
        <taxon>Eutheria</taxon>
        <taxon>Euarchontoglires</taxon>
        <taxon>Primates</taxon>
        <taxon>Haplorrhini</taxon>
        <taxon>Catarrhini</taxon>
        <taxon>Hominidae</taxon>
        <taxon>Homo</taxon>
    </lineage>
</organism>
<sequence length="840" mass="94331">MSVVGIDLGFQSCYVAVARAGGIETIANEYSDRCTPACISFGPKNRSIGAAAKSQVISNAKNTVQGFKRFHGRAFSDPFVEAEKSNLAYDIVQLPTGLTGIKVTYMEEERNFTTEQVTAMLLSKLKETAESVLKKPVVDCVVSVPCFYTDAERRSVMDATQIAGLNCLRLMNETTAVALAYGIYKQDLPALEEKPRNVVFVDMGHSAYQVSVCAFNRGKLKVLATAFDTTLGGRKFDEVLVNHFCEEFGKKYKLDIKSKIRALLRLSQECEKLKKLMSANASDLPLSIECFMNDVDVSGTMNRGKFLEMCNDLLARVEPPLRSVLEQTKLKKEDIYAVEIVGGATRIPAVKEKISKFFGKELSTTLNADEAVTRGCALQCAILSPAFKVREFSITDVVPYPISLRWNSPAEEGSSDCEVFSKNHAAPFSKVLTFYRKEPFTLEAYYSSPQDLPYPDPAIAQFSVQKVTPQSDGSSSKVKVKVRVNVHGIFSVSSASLVEVHKSEENEEPMETDQNAKEEEKMQVDQEEPHVEEQQQQTPAENKAESEEMETSQAGSKDKKMDQPPQAKKAKVKTSTVDLPIENQLLWQIDREMLNLYIENEGKMIMQDKLEKERNDAKNAVEEYVYEMRDKLSGEYEKFVSEDDRNSFTLKLEDTENWLYEDGEDQPKQVYVDKLAELKNLGQPIKIRFQESEERPKLFEELGKQIQQYMKIISSFKNKEDQYDHLDAADMTKVEKSTNEAMEWMNNKLNLQNKQSLTMDPVVKSKEIEAKIKELTSTCSPIISKPKPKVEPPKEEQKNAEQNGPVDGQGDNPGPQAAEQGTDTAVPSDSDKKLPEMDID</sequence>
<comment type="subunit">
    <text evidence="1">Interacts with TJP1/ZO-1.</text>
</comment>
<comment type="interaction">
    <interactant intactId="EBI-356933">
        <id>P34932</id>
    </interactant>
    <interactant intactId="EBI-741181">
        <id>Q6RW13</id>
        <label>AGTRAP</label>
    </interactant>
    <organismsDiffer>false</organismsDiffer>
    <experiments>3</experiments>
</comment>
<comment type="interaction">
    <interactant intactId="EBI-356933">
        <id>P34932</id>
    </interactant>
    <interactant intactId="EBI-743771">
        <id>Q92624</id>
        <label>APPBP2</label>
    </interactant>
    <organismsDiffer>false</organismsDiffer>
    <experiments>6</experiments>
</comment>
<comment type="interaction">
    <interactant intactId="EBI-356933">
        <id>P34932</id>
    </interactant>
    <interactant intactId="EBI-297353">
        <id>P00533</id>
        <label>EGFR</label>
    </interactant>
    <organismsDiffer>false</organismsDiffer>
    <experiments>3</experiments>
</comment>
<comment type="interaction">
    <interactant intactId="EBI-356933">
        <id>P34932</id>
    </interactant>
    <interactant intactId="EBI-351896">
        <id>P11142</id>
        <label>HSPA8</label>
    </interactant>
    <organismsDiffer>false</organismsDiffer>
    <experiments>7</experiments>
</comment>
<comment type="interaction">
    <interactant intactId="EBI-356933">
        <id>P34932</id>
    </interactant>
    <interactant intactId="EBI-12029004">
        <id>P78424</id>
        <label>POU6F2</label>
    </interactant>
    <organismsDiffer>false</organismsDiffer>
    <experiments>3</experiments>
</comment>
<comment type="subcellular location">
    <subcellularLocation>
        <location evidence="7">Cytoplasm</location>
    </subcellularLocation>
</comment>
<comment type="alternative products">
    <event type="alternative splicing"/>
    <isoform>
        <id>P34932-1</id>
        <name>1</name>
        <sequence type="displayed"/>
    </isoform>
    <isoform>
        <id>P34932-2</id>
        <name>2</name>
        <sequence type="described" ref="VSP_056885"/>
    </isoform>
</comment>
<comment type="similarity">
    <text evidence="7">Belongs to the heat shock protein 70 family.</text>
</comment>
<comment type="sequence caution" evidence="7">
    <conflict type="frameshift">
        <sequence resource="EMBL-CDS" id="AAA02807"/>
    </conflict>
</comment>
<protein>
    <recommendedName>
        <fullName>Heat shock 70 kDa protein 4</fullName>
    </recommendedName>
    <alternativeName>
        <fullName>HSP70RY</fullName>
    </alternativeName>
    <alternativeName>
        <fullName>Heat shock 70-related protein APG-2</fullName>
    </alternativeName>
    <alternativeName>
        <fullName evidence="5">Heat shock protein family H member 2</fullName>
    </alternativeName>
</protein>
<proteinExistence type="evidence at protein level"/>
<name>HSP74_HUMAN</name>
<keyword id="KW-0007">Acetylation</keyword>
<keyword id="KW-0025">Alternative splicing</keyword>
<keyword id="KW-0067">ATP-binding</keyword>
<keyword id="KW-0963">Cytoplasm</keyword>
<keyword id="KW-0903">Direct protein sequencing</keyword>
<keyword id="KW-0488">Methylation</keyword>
<keyword id="KW-0547">Nucleotide-binding</keyword>
<keyword id="KW-0597">Phosphoprotein</keyword>
<keyword id="KW-1267">Proteomics identification</keyword>
<keyword id="KW-1185">Reference proteome</keyword>
<keyword id="KW-0346">Stress response</keyword>
<evidence type="ECO:0000250" key="1"/>
<evidence type="ECO:0000250" key="2">
    <source>
        <dbReference type="UniProtKB" id="Q61316"/>
    </source>
</evidence>
<evidence type="ECO:0000256" key="3">
    <source>
        <dbReference type="SAM" id="MobiDB-lite"/>
    </source>
</evidence>
<evidence type="ECO:0000303" key="4">
    <source>
    </source>
</evidence>
<evidence type="ECO:0000303" key="5">
    <source>
    </source>
</evidence>
<evidence type="ECO:0000303" key="6">
    <source ref="2"/>
</evidence>
<evidence type="ECO:0000305" key="7"/>
<evidence type="ECO:0007744" key="8">
    <source>
    </source>
</evidence>
<evidence type="ECO:0007744" key="9">
    <source>
    </source>
</evidence>
<evidence type="ECO:0007744" key="10">
    <source>
    </source>
</evidence>
<evidence type="ECO:0007744" key="11">
    <source>
    </source>
</evidence>
<evidence type="ECO:0007744" key="12">
    <source>
    </source>
</evidence>
<evidence type="ECO:0007744" key="13">
    <source>
    </source>
</evidence>
<evidence type="ECO:0007744" key="14">
    <source>
    </source>
</evidence>
<gene>
    <name type="primary">HSPA4</name>
    <name type="synonym">APG2</name>
    <name evidence="5" type="synonym">HSPH2</name>
</gene>